<keyword id="KW-0050">Antiport</keyword>
<keyword id="KW-0997">Cell inner membrane</keyword>
<keyword id="KW-1003">Cell membrane</keyword>
<keyword id="KW-0406">Ion transport</keyword>
<keyword id="KW-0472">Membrane</keyword>
<keyword id="KW-0630">Potassium</keyword>
<keyword id="KW-0633">Potassium transport</keyword>
<keyword id="KW-0812">Transmembrane</keyword>
<keyword id="KW-1133">Transmembrane helix</keyword>
<keyword id="KW-0813">Transport</keyword>
<sequence length="620" mass="67040">MDSHTLLQALIYLGSAALIVPIAVRLGLGSVLGYLIAGCIIGPWGLRLVTDAESILHFAEIGVVLMLFVIGLELDPQRLWKLRASVFGGGALQMVVCGGLIGLFCMFLGLRWQVAELIGMTLALSSTAIAMQAMNERNLTVSQVGRSAFAVLLFQDIAAIPLVAMIPLLAASGASTTLGAFALSALKVAGALALVVLLGRYVTRPALRFVARSGLREVFSAVALFLVFGFGLLLEEVGLSMAMGAFLAGVLLASSEYRHALESDIEPFKGLLLGLFFIGVGMSIDFGTLVENPLRILLLLAGFLTIKIVMLWLVARPLGVPAKQRRWFAVLLGQGSEFAFVVFGAAQMAGVLEPEWAKALTLAVALSMAATPIFLVLLTRMEKTATGEAREADEIDEEQPRVIVAGFGRFGQIAGRLLLSSGVKMVVLDHDPDHIETLRKFGMKVFYGDATRMDLLESAGAAKAEVLINAIDDPQTNLQLSELVKSHFPHLQIIARARDVDHYIRLRQAGVAMPERETFEGALKSGRQALEALGLGRYEARERADLFRHFNTRMVEEMAKGENDPLSRAAAYKRTSAMLSEIITEDREHLSLIQRHGWQGTAEGKHSGEAADEPEVKPSI</sequence>
<dbReference type="EMBL" id="CP001127">
    <property type="protein sequence ID" value="ACF92213.1"/>
    <property type="molecule type" value="Genomic_DNA"/>
</dbReference>
<dbReference type="RefSeq" id="WP_000377173.1">
    <property type="nucleotide sequence ID" value="NC_011094.1"/>
</dbReference>
<dbReference type="SMR" id="B4TWT1"/>
<dbReference type="KEGG" id="sew:SeSA_A0096"/>
<dbReference type="HOGENOM" id="CLU_005126_9_3_6"/>
<dbReference type="Proteomes" id="UP000001865">
    <property type="component" value="Chromosome"/>
</dbReference>
<dbReference type="GO" id="GO:0005886">
    <property type="term" value="C:plasma membrane"/>
    <property type="evidence" value="ECO:0007669"/>
    <property type="project" value="UniProtKB-SubCell"/>
</dbReference>
<dbReference type="GO" id="GO:0019899">
    <property type="term" value="F:enzyme binding"/>
    <property type="evidence" value="ECO:0007669"/>
    <property type="project" value="InterPro"/>
</dbReference>
<dbReference type="GO" id="GO:0015503">
    <property type="term" value="F:glutathione-regulated potassium exporter activity"/>
    <property type="evidence" value="ECO:0007669"/>
    <property type="project" value="UniProtKB-UniRule"/>
</dbReference>
<dbReference type="GO" id="GO:0015643">
    <property type="term" value="F:toxic substance binding"/>
    <property type="evidence" value="ECO:0007669"/>
    <property type="project" value="InterPro"/>
</dbReference>
<dbReference type="GO" id="GO:1902600">
    <property type="term" value="P:proton transmembrane transport"/>
    <property type="evidence" value="ECO:0007669"/>
    <property type="project" value="InterPro"/>
</dbReference>
<dbReference type="GO" id="GO:0051595">
    <property type="term" value="P:response to methylglyoxal"/>
    <property type="evidence" value="ECO:0007669"/>
    <property type="project" value="InterPro"/>
</dbReference>
<dbReference type="FunFam" id="1.20.1530.20:FF:000001">
    <property type="entry name" value="Glutathione-regulated potassium-efflux system protein KefB"/>
    <property type="match status" value="1"/>
</dbReference>
<dbReference type="FunFam" id="3.40.50.720:FF:000036">
    <property type="entry name" value="Glutathione-regulated potassium-efflux system protein KefB"/>
    <property type="match status" value="1"/>
</dbReference>
<dbReference type="Gene3D" id="1.20.1530.20">
    <property type="match status" value="1"/>
</dbReference>
<dbReference type="Gene3D" id="3.40.50.720">
    <property type="entry name" value="NAD(P)-binding Rossmann-like Domain"/>
    <property type="match status" value="1"/>
</dbReference>
<dbReference type="HAMAP" id="MF_01413">
    <property type="entry name" value="K_H_efflux_KefC"/>
    <property type="match status" value="1"/>
</dbReference>
<dbReference type="InterPro" id="IPR006153">
    <property type="entry name" value="Cation/H_exchanger_TM"/>
</dbReference>
<dbReference type="InterPro" id="IPR004771">
    <property type="entry name" value="K/H_exchanger"/>
</dbReference>
<dbReference type="InterPro" id="IPR023941">
    <property type="entry name" value="K_H_efflux_KefC"/>
</dbReference>
<dbReference type="InterPro" id="IPR006036">
    <property type="entry name" value="K_uptake_TrkA"/>
</dbReference>
<dbReference type="InterPro" id="IPR038770">
    <property type="entry name" value="Na+/solute_symporter_sf"/>
</dbReference>
<dbReference type="InterPro" id="IPR036291">
    <property type="entry name" value="NAD(P)-bd_dom_sf"/>
</dbReference>
<dbReference type="InterPro" id="IPR003148">
    <property type="entry name" value="RCK_N"/>
</dbReference>
<dbReference type="NCBIfam" id="TIGR00932">
    <property type="entry name" value="2a37"/>
    <property type="match status" value="1"/>
</dbReference>
<dbReference type="NCBIfam" id="NF002924">
    <property type="entry name" value="PRK03562.1"/>
    <property type="match status" value="1"/>
</dbReference>
<dbReference type="PANTHER" id="PTHR46157:SF3">
    <property type="entry name" value="GLUTATHIONE-REGULATED POTASSIUM-EFFLUX SYSTEM PROTEIN KEFC"/>
    <property type="match status" value="1"/>
</dbReference>
<dbReference type="PANTHER" id="PTHR46157">
    <property type="entry name" value="K(+) EFFLUX ANTIPORTER 3, CHLOROPLASTIC"/>
    <property type="match status" value="1"/>
</dbReference>
<dbReference type="Pfam" id="PF00999">
    <property type="entry name" value="Na_H_Exchanger"/>
    <property type="match status" value="1"/>
</dbReference>
<dbReference type="Pfam" id="PF02254">
    <property type="entry name" value="TrkA_N"/>
    <property type="match status" value="1"/>
</dbReference>
<dbReference type="PRINTS" id="PR00335">
    <property type="entry name" value="KUPTAKETRKA"/>
</dbReference>
<dbReference type="SUPFAM" id="SSF51735">
    <property type="entry name" value="NAD(P)-binding Rossmann-fold domains"/>
    <property type="match status" value="1"/>
</dbReference>
<dbReference type="PROSITE" id="PS51201">
    <property type="entry name" value="RCK_N"/>
    <property type="match status" value="1"/>
</dbReference>
<evidence type="ECO:0000255" key="1">
    <source>
        <dbReference type="HAMAP-Rule" id="MF_01413"/>
    </source>
</evidence>
<evidence type="ECO:0000255" key="2">
    <source>
        <dbReference type="PROSITE-ProRule" id="PRU00543"/>
    </source>
</evidence>
<evidence type="ECO:0000256" key="3">
    <source>
        <dbReference type="SAM" id="MobiDB-lite"/>
    </source>
</evidence>
<accession>B4TWT1</accession>
<feature type="chain" id="PRO_1000145551" description="Glutathione-regulated potassium-efflux system protein KefC">
    <location>
        <begin position="1"/>
        <end position="620"/>
    </location>
</feature>
<feature type="transmembrane region" description="Helical" evidence="1">
    <location>
        <begin position="4"/>
        <end position="24"/>
    </location>
</feature>
<feature type="transmembrane region" description="Helical" evidence="1">
    <location>
        <begin position="26"/>
        <end position="46"/>
    </location>
</feature>
<feature type="transmembrane region" description="Helical" evidence="1">
    <location>
        <begin position="54"/>
        <end position="74"/>
    </location>
</feature>
<feature type="transmembrane region" description="Helical" evidence="1">
    <location>
        <begin position="90"/>
        <end position="110"/>
    </location>
</feature>
<feature type="transmembrane region" description="Helical" evidence="1">
    <location>
        <begin position="114"/>
        <end position="134"/>
    </location>
</feature>
<feature type="transmembrane region" description="Helical" evidence="1">
    <location>
        <begin position="149"/>
        <end position="169"/>
    </location>
</feature>
<feature type="transmembrane region" description="Helical" evidence="1">
    <location>
        <begin position="178"/>
        <end position="198"/>
    </location>
</feature>
<feature type="transmembrane region" description="Helical" evidence="1">
    <location>
        <begin position="218"/>
        <end position="238"/>
    </location>
</feature>
<feature type="transmembrane region" description="Helical" evidence="1">
    <location>
        <begin position="270"/>
        <end position="290"/>
    </location>
</feature>
<feature type="transmembrane region" description="Helical" evidence="1">
    <location>
        <begin position="294"/>
        <end position="314"/>
    </location>
</feature>
<feature type="transmembrane region" description="Helical" evidence="1">
    <location>
        <begin position="327"/>
        <end position="347"/>
    </location>
</feature>
<feature type="transmembrane region" description="Helical" evidence="1">
    <location>
        <begin position="359"/>
        <end position="379"/>
    </location>
</feature>
<feature type="domain" description="RCK N-terminal" evidence="2">
    <location>
        <begin position="399"/>
        <end position="518"/>
    </location>
</feature>
<feature type="region of interest" description="Disordered" evidence="3">
    <location>
        <begin position="599"/>
        <end position="620"/>
    </location>
</feature>
<protein>
    <recommendedName>
        <fullName evidence="1">Glutathione-regulated potassium-efflux system protein KefC</fullName>
    </recommendedName>
    <alternativeName>
        <fullName evidence="1">K(+)/H(+) antiporter</fullName>
    </alternativeName>
</protein>
<name>KEFC_SALSV</name>
<proteinExistence type="inferred from homology"/>
<gene>
    <name evidence="1" type="primary">kefC</name>
    <name type="ordered locus">SeSA_A0096</name>
</gene>
<comment type="function">
    <text evidence="1">Pore-forming subunit of a potassium efflux system that confers protection against electrophiles. Catalyzes K(+)/H(+) antiport.</text>
</comment>
<comment type="subunit">
    <text evidence="1">Homodimer. Interacts with the regulatory subunit KefF.</text>
</comment>
<comment type="subcellular location">
    <subcellularLocation>
        <location evidence="1">Cell inner membrane</location>
        <topology evidence="1">Multi-pass membrane protein</topology>
    </subcellularLocation>
</comment>
<comment type="similarity">
    <text evidence="1">Belongs to the monovalent cation:proton antiporter 2 (CPA2) transporter (TC 2.A.37) family. KefC subfamily.</text>
</comment>
<reference key="1">
    <citation type="journal article" date="2011" name="J. Bacteriol.">
        <title>Comparative genomics of 28 Salmonella enterica isolates: evidence for CRISPR-mediated adaptive sublineage evolution.</title>
        <authorList>
            <person name="Fricke W.F."/>
            <person name="Mammel M.K."/>
            <person name="McDermott P.F."/>
            <person name="Tartera C."/>
            <person name="White D.G."/>
            <person name="Leclerc J.E."/>
            <person name="Ravel J."/>
            <person name="Cebula T.A."/>
        </authorList>
    </citation>
    <scope>NUCLEOTIDE SEQUENCE [LARGE SCALE GENOMIC DNA]</scope>
    <source>
        <strain>CVM19633</strain>
    </source>
</reference>
<organism>
    <name type="scientific">Salmonella schwarzengrund (strain CVM19633)</name>
    <dbReference type="NCBI Taxonomy" id="439843"/>
    <lineage>
        <taxon>Bacteria</taxon>
        <taxon>Pseudomonadati</taxon>
        <taxon>Pseudomonadota</taxon>
        <taxon>Gammaproteobacteria</taxon>
        <taxon>Enterobacterales</taxon>
        <taxon>Enterobacteriaceae</taxon>
        <taxon>Salmonella</taxon>
    </lineage>
</organism>